<feature type="chain" id="PRO_0000165799" description="Probable cytosol aminopeptidase">
    <location>
        <begin position="1"/>
        <end position="513"/>
    </location>
</feature>
<feature type="active site" evidence="1">
    <location>
        <position position="287"/>
    </location>
</feature>
<feature type="active site" evidence="1">
    <location>
        <position position="361"/>
    </location>
</feature>
<feature type="binding site" evidence="1">
    <location>
        <position position="275"/>
    </location>
    <ligand>
        <name>Mn(2+)</name>
        <dbReference type="ChEBI" id="CHEBI:29035"/>
        <label>2</label>
    </ligand>
</feature>
<feature type="binding site" evidence="1">
    <location>
        <position position="280"/>
    </location>
    <ligand>
        <name>Mn(2+)</name>
        <dbReference type="ChEBI" id="CHEBI:29035"/>
        <label>1</label>
    </ligand>
</feature>
<feature type="binding site" evidence="1">
    <location>
        <position position="280"/>
    </location>
    <ligand>
        <name>Mn(2+)</name>
        <dbReference type="ChEBI" id="CHEBI:29035"/>
        <label>2</label>
    </ligand>
</feature>
<feature type="binding site" evidence="1">
    <location>
        <position position="298"/>
    </location>
    <ligand>
        <name>Mn(2+)</name>
        <dbReference type="ChEBI" id="CHEBI:29035"/>
        <label>2</label>
    </ligand>
</feature>
<feature type="binding site" evidence="1">
    <location>
        <position position="357"/>
    </location>
    <ligand>
        <name>Mn(2+)</name>
        <dbReference type="ChEBI" id="CHEBI:29035"/>
        <label>1</label>
    </ligand>
</feature>
<feature type="binding site" evidence="1">
    <location>
        <position position="359"/>
    </location>
    <ligand>
        <name>Mn(2+)</name>
        <dbReference type="ChEBI" id="CHEBI:29035"/>
        <label>1</label>
    </ligand>
</feature>
<feature type="binding site" evidence="1">
    <location>
        <position position="359"/>
    </location>
    <ligand>
        <name>Mn(2+)</name>
        <dbReference type="ChEBI" id="CHEBI:29035"/>
        <label>2</label>
    </ligand>
</feature>
<reference key="1">
    <citation type="journal article" date="2001" name="Proc. Natl. Acad. Sci. U.S.A.">
        <title>Genome sequence of an industrial microorganism Streptomyces avermitilis: deducing the ability of producing secondary metabolites.</title>
        <authorList>
            <person name="Omura S."/>
            <person name="Ikeda H."/>
            <person name="Ishikawa J."/>
            <person name="Hanamoto A."/>
            <person name="Takahashi C."/>
            <person name="Shinose M."/>
            <person name="Takahashi Y."/>
            <person name="Horikawa H."/>
            <person name="Nakazawa H."/>
            <person name="Osonoe T."/>
            <person name="Kikuchi H."/>
            <person name="Shiba T."/>
            <person name="Sakaki Y."/>
            <person name="Hattori M."/>
        </authorList>
    </citation>
    <scope>NUCLEOTIDE SEQUENCE [LARGE SCALE GENOMIC DNA]</scope>
    <source>
        <strain>ATCC 31267 / DSM 46492 / JCM 5070 / NBRC 14893 / NCIMB 12804 / NRRL 8165 / MA-4680</strain>
    </source>
</reference>
<reference key="2">
    <citation type="journal article" date="2003" name="Nat. Biotechnol.">
        <title>Complete genome sequence and comparative analysis of the industrial microorganism Streptomyces avermitilis.</title>
        <authorList>
            <person name="Ikeda H."/>
            <person name="Ishikawa J."/>
            <person name="Hanamoto A."/>
            <person name="Shinose M."/>
            <person name="Kikuchi H."/>
            <person name="Shiba T."/>
            <person name="Sakaki Y."/>
            <person name="Hattori M."/>
            <person name="Omura S."/>
        </authorList>
    </citation>
    <scope>NUCLEOTIDE SEQUENCE [LARGE SCALE GENOMIC DNA]</scope>
    <source>
        <strain>ATCC 31267 / DSM 46492 / JCM 5070 / NBRC 14893 / NCIMB 12804 / NRRL 8165 / MA-4680</strain>
    </source>
</reference>
<sequence length="513" mass="51922">MTALTLSTAAASGLRADAIVVGVAKSPKGDKGLVVAPGAEAVDKGYDGKLAAVLETLGASGAEGEVTKLPAPSGFKAPVVVAVGLGAAPEDGQDKGTAFDAEALRRAAGAAARALAGAKKAAFALPVADAADAGTIGEGALLGAYSFDAYKENGRNAKNGKAPLAEVVLLGGKPRDKAFKAAVERAVAVTEELNRARDLINTPPNDLNPESFAAVAQAAAKEHGIKVQVLDEKALTKGGYGGILGVGAGSAAGPRLVKLSYTSSKAKKHLAFVGKGITYDSGGISLKPAGHNETMKCDMSGAAAVFAAVVAAARLGLEVNVTGWLALAENMPSGTATRPGDVLRMYSGKTVEVLNTDAEGRLVLADALWAASEEKPDAIVDVATLTGAMMLALGNRLFGVMANDDAFRTAVVEAAEEVGEDSWPMPLPEHLRKGMDSPTADIANMGERMGGGLVAGLFLREFVGEGITWAHLDIAGPAFNEAAPFGYTPKGGTGTAVRTLVRLAELTAAGDLG</sequence>
<dbReference type="EC" id="3.4.11.1" evidence="1"/>
<dbReference type="EC" id="3.4.11.10" evidence="1"/>
<dbReference type="EMBL" id="BA000030">
    <property type="protein sequence ID" value="BAC73736.1"/>
    <property type="molecule type" value="Genomic_DNA"/>
</dbReference>
<dbReference type="RefSeq" id="WP_010987426.1">
    <property type="nucleotide sequence ID" value="NZ_JZJK01000089.1"/>
</dbReference>
<dbReference type="SMR" id="Q82AN2"/>
<dbReference type="GeneID" id="41543103"/>
<dbReference type="KEGG" id="sma:SAVERM_6025"/>
<dbReference type="eggNOG" id="COG0260">
    <property type="taxonomic scope" value="Bacteria"/>
</dbReference>
<dbReference type="HOGENOM" id="CLU_013734_2_2_11"/>
<dbReference type="OrthoDB" id="9809354at2"/>
<dbReference type="Proteomes" id="UP000000428">
    <property type="component" value="Chromosome"/>
</dbReference>
<dbReference type="GO" id="GO:0005737">
    <property type="term" value="C:cytoplasm"/>
    <property type="evidence" value="ECO:0007669"/>
    <property type="project" value="UniProtKB-SubCell"/>
</dbReference>
<dbReference type="GO" id="GO:0030145">
    <property type="term" value="F:manganese ion binding"/>
    <property type="evidence" value="ECO:0007669"/>
    <property type="project" value="UniProtKB-UniRule"/>
</dbReference>
<dbReference type="GO" id="GO:0070006">
    <property type="term" value="F:metalloaminopeptidase activity"/>
    <property type="evidence" value="ECO:0007669"/>
    <property type="project" value="InterPro"/>
</dbReference>
<dbReference type="GO" id="GO:0006508">
    <property type="term" value="P:proteolysis"/>
    <property type="evidence" value="ECO:0007669"/>
    <property type="project" value="UniProtKB-KW"/>
</dbReference>
<dbReference type="CDD" id="cd00433">
    <property type="entry name" value="Peptidase_M17"/>
    <property type="match status" value="1"/>
</dbReference>
<dbReference type="Gene3D" id="3.40.220.10">
    <property type="entry name" value="Leucine Aminopeptidase, subunit E, domain 1"/>
    <property type="match status" value="1"/>
</dbReference>
<dbReference type="Gene3D" id="3.40.630.10">
    <property type="entry name" value="Zn peptidases"/>
    <property type="match status" value="1"/>
</dbReference>
<dbReference type="HAMAP" id="MF_00181">
    <property type="entry name" value="Cytosol_peptidase_M17"/>
    <property type="match status" value="1"/>
</dbReference>
<dbReference type="InterPro" id="IPR011356">
    <property type="entry name" value="Leucine_aapep/pepB"/>
</dbReference>
<dbReference type="InterPro" id="IPR043472">
    <property type="entry name" value="Macro_dom-like"/>
</dbReference>
<dbReference type="InterPro" id="IPR000819">
    <property type="entry name" value="Peptidase_M17_C"/>
</dbReference>
<dbReference type="InterPro" id="IPR023042">
    <property type="entry name" value="Peptidase_M17_leu_NH2_pept"/>
</dbReference>
<dbReference type="InterPro" id="IPR008283">
    <property type="entry name" value="Peptidase_M17_N"/>
</dbReference>
<dbReference type="NCBIfam" id="NF002073">
    <property type="entry name" value="PRK00913.1-2"/>
    <property type="match status" value="1"/>
</dbReference>
<dbReference type="PANTHER" id="PTHR11963:SF23">
    <property type="entry name" value="CYTOSOL AMINOPEPTIDASE"/>
    <property type="match status" value="1"/>
</dbReference>
<dbReference type="PANTHER" id="PTHR11963">
    <property type="entry name" value="LEUCINE AMINOPEPTIDASE-RELATED"/>
    <property type="match status" value="1"/>
</dbReference>
<dbReference type="Pfam" id="PF00883">
    <property type="entry name" value="Peptidase_M17"/>
    <property type="match status" value="1"/>
</dbReference>
<dbReference type="Pfam" id="PF02789">
    <property type="entry name" value="Peptidase_M17_N"/>
    <property type="match status" value="1"/>
</dbReference>
<dbReference type="PRINTS" id="PR00481">
    <property type="entry name" value="LAMNOPPTDASE"/>
</dbReference>
<dbReference type="SUPFAM" id="SSF52949">
    <property type="entry name" value="Macro domain-like"/>
    <property type="match status" value="1"/>
</dbReference>
<dbReference type="SUPFAM" id="SSF53187">
    <property type="entry name" value="Zn-dependent exopeptidases"/>
    <property type="match status" value="1"/>
</dbReference>
<dbReference type="PROSITE" id="PS00631">
    <property type="entry name" value="CYTOSOL_AP"/>
    <property type="match status" value="1"/>
</dbReference>
<organism>
    <name type="scientific">Streptomyces avermitilis (strain ATCC 31267 / DSM 46492 / JCM 5070 / NBRC 14893 / NCIMB 12804 / NRRL 8165 / MA-4680)</name>
    <dbReference type="NCBI Taxonomy" id="227882"/>
    <lineage>
        <taxon>Bacteria</taxon>
        <taxon>Bacillati</taxon>
        <taxon>Actinomycetota</taxon>
        <taxon>Actinomycetes</taxon>
        <taxon>Kitasatosporales</taxon>
        <taxon>Streptomycetaceae</taxon>
        <taxon>Streptomyces</taxon>
    </lineage>
</organism>
<evidence type="ECO:0000255" key="1">
    <source>
        <dbReference type="HAMAP-Rule" id="MF_00181"/>
    </source>
</evidence>
<comment type="function">
    <text evidence="1">Presumably involved in the processing and regular turnover of intracellular proteins. Catalyzes the removal of unsubstituted N-terminal amino acids from various peptides.</text>
</comment>
<comment type="catalytic activity">
    <reaction evidence="1">
        <text>Release of an N-terminal amino acid, Xaa-|-Yaa-, in which Xaa is preferably Leu, but may be other amino acids including Pro although not Arg or Lys, and Yaa may be Pro. Amino acid amides and methyl esters are also readily hydrolyzed, but rates on arylamides are exceedingly low.</text>
        <dbReference type="EC" id="3.4.11.1"/>
    </reaction>
</comment>
<comment type="catalytic activity">
    <reaction evidence="1">
        <text>Release of an N-terminal amino acid, preferentially leucine, but not glutamic or aspartic acids.</text>
        <dbReference type="EC" id="3.4.11.10"/>
    </reaction>
</comment>
<comment type="cofactor">
    <cofactor evidence="1">
        <name>Mn(2+)</name>
        <dbReference type="ChEBI" id="CHEBI:29035"/>
    </cofactor>
    <text evidence="1">Binds 2 manganese ions per subunit.</text>
</comment>
<comment type="subcellular location">
    <subcellularLocation>
        <location evidence="1">Cytoplasm</location>
    </subcellularLocation>
</comment>
<comment type="similarity">
    <text evidence="1">Belongs to the peptidase M17 family.</text>
</comment>
<keyword id="KW-0031">Aminopeptidase</keyword>
<keyword id="KW-0963">Cytoplasm</keyword>
<keyword id="KW-0378">Hydrolase</keyword>
<keyword id="KW-0464">Manganese</keyword>
<keyword id="KW-0479">Metal-binding</keyword>
<keyword id="KW-0645">Protease</keyword>
<keyword id="KW-1185">Reference proteome</keyword>
<protein>
    <recommendedName>
        <fullName evidence="1">Probable cytosol aminopeptidase</fullName>
        <ecNumber evidence="1">3.4.11.1</ecNumber>
    </recommendedName>
    <alternativeName>
        <fullName evidence="1">Leucine aminopeptidase</fullName>
        <shortName evidence="1">LAP</shortName>
        <ecNumber evidence="1">3.4.11.10</ecNumber>
    </alternativeName>
    <alternativeName>
        <fullName evidence="1">Leucyl aminopeptidase</fullName>
    </alternativeName>
</protein>
<accession>Q82AN2</accession>
<proteinExistence type="inferred from homology"/>
<gene>
    <name evidence="1" type="primary">pepA</name>
    <name type="ordered locus">SAV_6025</name>
</gene>
<name>AMPA_STRAW</name>